<organism>
    <name type="scientific">Aspergillus oryzae (strain ATCC 42149 / RIB 40)</name>
    <name type="common">Yellow koji mold</name>
    <dbReference type="NCBI Taxonomy" id="510516"/>
    <lineage>
        <taxon>Eukaryota</taxon>
        <taxon>Fungi</taxon>
        <taxon>Dikarya</taxon>
        <taxon>Ascomycota</taxon>
        <taxon>Pezizomycotina</taxon>
        <taxon>Eurotiomycetes</taxon>
        <taxon>Eurotiomycetidae</taxon>
        <taxon>Eurotiales</taxon>
        <taxon>Aspergillaceae</taxon>
        <taxon>Aspergillus</taxon>
        <taxon>Aspergillus subgen. Circumdati</taxon>
    </lineage>
</organism>
<feature type="chain" id="PRO_0000450495" description="Ankyrin repeat domain-containing protein oryK">
    <location>
        <begin position="1"/>
        <end position="625"/>
    </location>
</feature>
<feature type="repeat" description="ANK 1" evidence="1">
    <location>
        <begin position="1"/>
        <end position="27"/>
    </location>
</feature>
<feature type="repeat" description="ANK 2" evidence="1">
    <location>
        <begin position="31"/>
        <end position="60"/>
    </location>
</feature>
<feature type="repeat" description="ANK 3" evidence="1">
    <location>
        <begin position="62"/>
        <end position="89"/>
    </location>
</feature>
<feature type="repeat" description="ANK 4" evidence="1">
    <location>
        <begin position="90"/>
        <end position="119"/>
    </location>
</feature>
<feature type="repeat" description="ANK 5" evidence="1">
    <location>
        <begin position="162"/>
        <end position="195"/>
    </location>
</feature>
<feature type="repeat" description="ANK 6" evidence="1">
    <location>
        <begin position="202"/>
        <end position="232"/>
    </location>
</feature>
<feature type="repeat" description="ANK 7" evidence="1">
    <location>
        <begin position="500"/>
        <end position="530"/>
    </location>
</feature>
<feature type="repeat" description="ANK 8" evidence="1">
    <location>
        <begin position="534"/>
        <end position="562"/>
    </location>
</feature>
<feature type="repeat" description="ANK 9" evidence="1">
    <location>
        <begin position="568"/>
        <end position="598"/>
    </location>
</feature>
<protein>
    <recommendedName>
        <fullName evidence="3">Ankyrin repeat domain-containing protein oryK</fullName>
    </recommendedName>
    <alternativeName>
        <fullName evidence="3">Oryzines biosynthesis cluster protein K</fullName>
    </alternativeName>
</protein>
<comment type="function">
    <text evidence="2 5">Ankyrin repeat domain-containing protein; part of the gene cluster that mediates the biosynthesis of oryzines, natural products with an unusual maleidride backbone (PubMed:30104550). The two subunits of the fungal fatty acid synthase oryfasA and oryfasB probably form octenoic acid (Probable). This fatty acid is most likely activated by the acyl-CoA ligase oryP to give octenyl-CoA before the citrate synthase-like protein oryE catalyzes condensation with oxaloacetate to form tricarboxylic acid (Probable). The next steps of the pathways are conjectural, but a favorite possible route has been proposed, beginning with decarboxylation and concomitant dehydration by the decarboxylase oryM, followed by tautomerization, which may lead to the production of a diene intermediate (Probable). Reduction of this diene intermediate could give the known metabolite piliformic acid (Probable). On the pathway to oryzine B and oryzine A, however, hydroxylation of the diene by the alpha-ketoglutarate-dependent dioxygenase oryG and lactonisation by the lactonohydrolases oryH or oryL could give oryzine B directly (Probable). Finally, enoyl reduction by the dehydrogenase oryD would then convert oryzine B into oryzine A (Probable).</text>
</comment>
<comment type="pathway">
    <text evidence="5">Secondary metabolite biosynthesis.</text>
</comment>
<comment type="sequence caution" evidence="4">
    <conflict type="erroneous gene model prediction">
        <sequence resource="EMBL-CDS" id="BAE66067"/>
    </conflict>
</comment>
<gene>
    <name evidence="3" type="primary">oryK</name>
    <name type="ORF">AO090010000165</name>
</gene>
<name>ORYK_ASPOR</name>
<evidence type="ECO:0000255" key="1"/>
<evidence type="ECO:0000269" key="2">
    <source>
    </source>
</evidence>
<evidence type="ECO:0000303" key="3">
    <source>
    </source>
</evidence>
<evidence type="ECO:0000305" key="4"/>
<evidence type="ECO:0000305" key="5">
    <source>
    </source>
</evidence>
<sequence>MDIYEAASQGRIDAIKFAVEQGCDVDGPNEDGKTPLWFAVQSGQPEACRFLMSLGAGRGPQNPSLLEVAVGGGYADIVALLWPHCNAEREHRSLKTAISLGFHEIADFLIETGAFEYQDSEVSGTESLIEDGSPERESTVFQQWERFLFVRRGQKLPLHRVFFDYALLLATKAGRNAGLRLVEFLLGESMPDVNCKIMINGQFETPLTAAAEKGNLEILATLIDHPNIDLTICGKYNWPAFLHLLASPLSISTERGRVIARRLAYKAVYNRLFIDSREIRLQGAFQNVLRFGDDGLVKQVIDLVRGAAGTLILPLLIRANEVDGLTWVLNCDGVSSKKPPPAFWVLLCQYFKRYQDQDALGLFTSVTEFLVEKKIWNQAILKCLHACNFSFIQQFFYPLSEAPPKEVTEETLSPGFENLLFSNADLNGSDPHPNGLGRLELEIIPHAFFDDPSSAAQKISLRSALPSASPNPSNPHLYSYQMELIRLEQQNKRRLFFAGDTRCPLSWAAKSHNAPLVNALLRSPQVNVNFQDPSDRTPLLYAIAVNDRPIVERLLNHRDIDLNLRDAEGRTAIFYAAQGGDLSIVQLLIGTQNVDFSIRNKNGKNVKEFAKKAKLKQDIVAALSN</sequence>
<keyword id="KW-0040">ANK repeat</keyword>
<keyword id="KW-1185">Reference proteome</keyword>
<keyword id="KW-0677">Repeat</keyword>
<accession>Q2TXF6</accession>
<dbReference type="EMBL" id="BA000056">
    <property type="protein sequence ID" value="BAE66067.1"/>
    <property type="status" value="ALT_SEQ"/>
    <property type="molecule type" value="Genomic_DNA"/>
</dbReference>
<dbReference type="SMR" id="Q2TXF6"/>
<dbReference type="EnsemblFungi" id="BAE66067">
    <property type="protein sequence ID" value="BAE66067"/>
    <property type="gene ID" value="AO090010000165"/>
</dbReference>
<dbReference type="HOGENOM" id="CLU_683294_0_0_1"/>
<dbReference type="Proteomes" id="UP000006564">
    <property type="component" value="Chromosome 8"/>
</dbReference>
<dbReference type="Gene3D" id="1.25.40.20">
    <property type="entry name" value="Ankyrin repeat-containing domain"/>
    <property type="match status" value="3"/>
</dbReference>
<dbReference type="InterPro" id="IPR002110">
    <property type="entry name" value="Ankyrin_rpt"/>
</dbReference>
<dbReference type="InterPro" id="IPR036770">
    <property type="entry name" value="Ankyrin_rpt-contain_sf"/>
</dbReference>
<dbReference type="PANTHER" id="PTHR24198">
    <property type="entry name" value="ANKYRIN REPEAT AND PROTEIN KINASE DOMAIN-CONTAINING PROTEIN"/>
    <property type="match status" value="1"/>
</dbReference>
<dbReference type="PANTHER" id="PTHR24198:SF165">
    <property type="entry name" value="ANKYRIN REPEAT-CONTAINING PROTEIN-RELATED"/>
    <property type="match status" value="1"/>
</dbReference>
<dbReference type="Pfam" id="PF12796">
    <property type="entry name" value="Ank_2"/>
    <property type="match status" value="2"/>
</dbReference>
<dbReference type="SMART" id="SM00248">
    <property type="entry name" value="ANK"/>
    <property type="match status" value="6"/>
</dbReference>
<dbReference type="SUPFAM" id="SSF48403">
    <property type="entry name" value="Ankyrin repeat"/>
    <property type="match status" value="2"/>
</dbReference>
<dbReference type="PROSITE" id="PS50297">
    <property type="entry name" value="ANK_REP_REGION"/>
    <property type="match status" value="2"/>
</dbReference>
<dbReference type="PROSITE" id="PS50088">
    <property type="entry name" value="ANK_REPEAT"/>
    <property type="match status" value="1"/>
</dbReference>
<reference key="1">
    <citation type="journal article" date="2005" name="Nature">
        <title>Genome sequencing and analysis of Aspergillus oryzae.</title>
        <authorList>
            <person name="Machida M."/>
            <person name="Asai K."/>
            <person name="Sano M."/>
            <person name="Tanaka T."/>
            <person name="Kumagai T."/>
            <person name="Terai G."/>
            <person name="Kusumoto K."/>
            <person name="Arima T."/>
            <person name="Akita O."/>
            <person name="Kashiwagi Y."/>
            <person name="Abe K."/>
            <person name="Gomi K."/>
            <person name="Horiuchi H."/>
            <person name="Kitamoto K."/>
            <person name="Kobayashi T."/>
            <person name="Takeuchi M."/>
            <person name="Denning D.W."/>
            <person name="Galagan J.E."/>
            <person name="Nierman W.C."/>
            <person name="Yu J."/>
            <person name="Archer D.B."/>
            <person name="Bennett J.W."/>
            <person name="Bhatnagar D."/>
            <person name="Cleveland T.E."/>
            <person name="Fedorova N.D."/>
            <person name="Gotoh O."/>
            <person name="Horikawa H."/>
            <person name="Hosoyama A."/>
            <person name="Ichinomiya M."/>
            <person name="Igarashi R."/>
            <person name="Iwashita K."/>
            <person name="Juvvadi P.R."/>
            <person name="Kato M."/>
            <person name="Kato Y."/>
            <person name="Kin T."/>
            <person name="Kokubun A."/>
            <person name="Maeda H."/>
            <person name="Maeyama N."/>
            <person name="Maruyama J."/>
            <person name="Nagasaki H."/>
            <person name="Nakajima T."/>
            <person name="Oda K."/>
            <person name="Okada K."/>
            <person name="Paulsen I."/>
            <person name="Sakamoto K."/>
            <person name="Sawano T."/>
            <person name="Takahashi M."/>
            <person name="Takase K."/>
            <person name="Terabayashi Y."/>
            <person name="Wortman J.R."/>
            <person name="Yamada O."/>
            <person name="Yamagata Y."/>
            <person name="Anazawa H."/>
            <person name="Hata Y."/>
            <person name="Koide Y."/>
            <person name="Komori T."/>
            <person name="Koyama Y."/>
            <person name="Minetoki T."/>
            <person name="Suharnan S."/>
            <person name="Tanaka A."/>
            <person name="Isono K."/>
            <person name="Kuhara S."/>
            <person name="Ogasawara N."/>
            <person name="Kikuchi H."/>
        </authorList>
    </citation>
    <scope>NUCLEOTIDE SEQUENCE [LARGE SCALE GENOMIC DNA]</scope>
    <source>
        <strain>ATCC 42149 / RIB 40</strain>
    </source>
</reference>
<reference key="2">
    <citation type="journal article" date="2018" name="J. Fungi">
        <title>Oryzines A &amp; B, maleidride congeners from Aspergillus oryzae and their putative biosynthesis.</title>
        <authorList>
            <person name="Wasil Z."/>
            <person name="Kuhnert E."/>
            <person name="Simpson T.J."/>
            <person name="Cox R.J."/>
        </authorList>
    </citation>
    <scope>FUNCTION</scope>
    <scope>PATHWAY</scope>
</reference>
<proteinExistence type="predicted"/>